<feature type="chain" id="PRO_0000151747" description="GTP cyclohydrolase-2">
    <location>
        <begin position="1"/>
        <end position="200"/>
    </location>
</feature>
<feature type="active site" description="Proton acceptor" evidence="1">
    <location>
        <position position="127"/>
    </location>
</feature>
<feature type="active site" description="Nucleophile" evidence="1">
    <location>
        <position position="129"/>
    </location>
</feature>
<feature type="binding site" evidence="1">
    <location>
        <begin position="50"/>
        <end position="54"/>
    </location>
    <ligand>
        <name>GTP</name>
        <dbReference type="ChEBI" id="CHEBI:37565"/>
    </ligand>
</feature>
<feature type="binding site" evidence="1">
    <location>
        <position position="55"/>
    </location>
    <ligand>
        <name>Zn(2+)</name>
        <dbReference type="ChEBI" id="CHEBI:29105"/>
        <note>catalytic</note>
    </ligand>
</feature>
<feature type="binding site" evidence="1">
    <location>
        <position position="66"/>
    </location>
    <ligand>
        <name>Zn(2+)</name>
        <dbReference type="ChEBI" id="CHEBI:29105"/>
        <note>catalytic</note>
    </ligand>
</feature>
<feature type="binding site" evidence="1">
    <location>
        <position position="68"/>
    </location>
    <ligand>
        <name>Zn(2+)</name>
        <dbReference type="ChEBI" id="CHEBI:29105"/>
        <note>catalytic</note>
    </ligand>
</feature>
<feature type="binding site" evidence="1">
    <location>
        <position position="71"/>
    </location>
    <ligand>
        <name>GTP</name>
        <dbReference type="ChEBI" id="CHEBI:37565"/>
    </ligand>
</feature>
<feature type="binding site" evidence="1">
    <location>
        <begin position="93"/>
        <end position="95"/>
    </location>
    <ligand>
        <name>GTP</name>
        <dbReference type="ChEBI" id="CHEBI:37565"/>
    </ligand>
</feature>
<feature type="binding site" evidence="1">
    <location>
        <position position="115"/>
    </location>
    <ligand>
        <name>GTP</name>
        <dbReference type="ChEBI" id="CHEBI:37565"/>
    </ligand>
</feature>
<feature type="binding site" evidence="1">
    <location>
        <position position="150"/>
    </location>
    <ligand>
        <name>GTP</name>
        <dbReference type="ChEBI" id="CHEBI:37565"/>
    </ligand>
</feature>
<feature type="binding site" evidence="1">
    <location>
        <position position="155"/>
    </location>
    <ligand>
        <name>GTP</name>
        <dbReference type="ChEBI" id="CHEBI:37565"/>
    </ligand>
</feature>
<name>RIBA_ACIAD</name>
<reference key="1">
    <citation type="journal article" date="2004" name="Nucleic Acids Res.">
        <title>Unique features revealed by the genome sequence of Acinetobacter sp. ADP1, a versatile and naturally transformation competent bacterium.</title>
        <authorList>
            <person name="Barbe V."/>
            <person name="Vallenet D."/>
            <person name="Fonknechten N."/>
            <person name="Kreimeyer A."/>
            <person name="Oztas S."/>
            <person name="Labarre L."/>
            <person name="Cruveiller S."/>
            <person name="Robert C."/>
            <person name="Duprat S."/>
            <person name="Wincker P."/>
            <person name="Ornston L.N."/>
            <person name="Weissenbach J."/>
            <person name="Marliere P."/>
            <person name="Cohen G.N."/>
            <person name="Medigue C."/>
        </authorList>
    </citation>
    <scope>NUCLEOTIDE SEQUENCE [LARGE SCALE GENOMIC DNA]</scope>
    <source>
        <strain>ATCC 33305 / BD413 / ADP1</strain>
    </source>
</reference>
<accession>Q6F7N4</accession>
<organism>
    <name type="scientific">Acinetobacter baylyi (strain ATCC 33305 / BD413 / ADP1)</name>
    <dbReference type="NCBI Taxonomy" id="62977"/>
    <lineage>
        <taxon>Bacteria</taxon>
        <taxon>Pseudomonadati</taxon>
        <taxon>Pseudomonadota</taxon>
        <taxon>Gammaproteobacteria</taxon>
        <taxon>Moraxellales</taxon>
        <taxon>Moraxellaceae</taxon>
        <taxon>Acinetobacter</taxon>
    </lineage>
</organism>
<protein>
    <recommendedName>
        <fullName evidence="1">GTP cyclohydrolase-2</fullName>
        <ecNumber evidence="1">3.5.4.25</ecNumber>
    </recommendedName>
    <alternativeName>
        <fullName evidence="1">GTP cyclohydrolase II</fullName>
    </alternativeName>
</protein>
<gene>
    <name evidence="1" type="primary">ribA</name>
    <name type="ordered locus">ACIAD3249</name>
</gene>
<proteinExistence type="inferred from homology"/>
<comment type="function">
    <text evidence="1">Catalyzes the conversion of GTP to 2,5-diamino-6-ribosylamino-4(3H)-pyrimidinone 5'-phosphate (DARP), formate and pyrophosphate.</text>
</comment>
<comment type="catalytic activity">
    <reaction evidence="1">
        <text>GTP + 4 H2O = 2,5-diamino-6-hydroxy-4-(5-phosphoribosylamino)-pyrimidine + formate + 2 phosphate + 3 H(+)</text>
        <dbReference type="Rhea" id="RHEA:23704"/>
        <dbReference type="ChEBI" id="CHEBI:15377"/>
        <dbReference type="ChEBI" id="CHEBI:15378"/>
        <dbReference type="ChEBI" id="CHEBI:15740"/>
        <dbReference type="ChEBI" id="CHEBI:37565"/>
        <dbReference type="ChEBI" id="CHEBI:43474"/>
        <dbReference type="ChEBI" id="CHEBI:58614"/>
        <dbReference type="EC" id="3.5.4.25"/>
    </reaction>
</comment>
<comment type="cofactor">
    <cofactor evidence="1">
        <name>Zn(2+)</name>
        <dbReference type="ChEBI" id="CHEBI:29105"/>
    </cofactor>
    <text evidence="1">Binds 1 zinc ion per subunit.</text>
</comment>
<comment type="pathway">
    <text evidence="1">Cofactor biosynthesis; riboflavin biosynthesis; 5-amino-6-(D-ribitylamino)uracil from GTP: step 1/4.</text>
</comment>
<comment type="similarity">
    <text evidence="1">Belongs to the GTP cyclohydrolase II family.</text>
</comment>
<keyword id="KW-0342">GTP-binding</keyword>
<keyword id="KW-0378">Hydrolase</keyword>
<keyword id="KW-0479">Metal-binding</keyword>
<keyword id="KW-0547">Nucleotide-binding</keyword>
<keyword id="KW-0686">Riboflavin biosynthesis</keyword>
<keyword id="KW-0862">Zinc</keyword>
<dbReference type="EC" id="3.5.4.25" evidence="1"/>
<dbReference type="EMBL" id="CR543861">
    <property type="protein sequence ID" value="CAG69931.1"/>
    <property type="molecule type" value="Genomic_DNA"/>
</dbReference>
<dbReference type="RefSeq" id="WP_004924006.1">
    <property type="nucleotide sequence ID" value="NC_005966.1"/>
</dbReference>
<dbReference type="SMR" id="Q6F7N4"/>
<dbReference type="STRING" id="202950.GCA_001485005_02907"/>
<dbReference type="GeneID" id="45235462"/>
<dbReference type="KEGG" id="aci:ACIAD3249"/>
<dbReference type="eggNOG" id="COG0807">
    <property type="taxonomic scope" value="Bacteria"/>
</dbReference>
<dbReference type="HOGENOM" id="CLU_020273_2_1_6"/>
<dbReference type="OrthoDB" id="9793111at2"/>
<dbReference type="BioCyc" id="ASP62977:ACIAD_RS14735-MONOMER"/>
<dbReference type="UniPathway" id="UPA00275">
    <property type="reaction ID" value="UER00400"/>
</dbReference>
<dbReference type="Proteomes" id="UP000000430">
    <property type="component" value="Chromosome"/>
</dbReference>
<dbReference type="GO" id="GO:0005829">
    <property type="term" value="C:cytosol"/>
    <property type="evidence" value="ECO:0007669"/>
    <property type="project" value="TreeGrafter"/>
</dbReference>
<dbReference type="GO" id="GO:0005525">
    <property type="term" value="F:GTP binding"/>
    <property type="evidence" value="ECO:0007669"/>
    <property type="project" value="UniProtKB-KW"/>
</dbReference>
<dbReference type="GO" id="GO:0003935">
    <property type="term" value="F:GTP cyclohydrolase II activity"/>
    <property type="evidence" value="ECO:0007669"/>
    <property type="project" value="UniProtKB-UniRule"/>
</dbReference>
<dbReference type="GO" id="GO:0008270">
    <property type="term" value="F:zinc ion binding"/>
    <property type="evidence" value="ECO:0007669"/>
    <property type="project" value="UniProtKB-UniRule"/>
</dbReference>
<dbReference type="GO" id="GO:0009231">
    <property type="term" value="P:riboflavin biosynthetic process"/>
    <property type="evidence" value="ECO:0007669"/>
    <property type="project" value="UniProtKB-UniRule"/>
</dbReference>
<dbReference type="CDD" id="cd00641">
    <property type="entry name" value="GTP_cyclohydro2"/>
    <property type="match status" value="1"/>
</dbReference>
<dbReference type="FunFam" id="3.40.50.10990:FF:000002">
    <property type="entry name" value="GTP cyclohydrolase-2"/>
    <property type="match status" value="1"/>
</dbReference>
<dbReference type="Gene3D" id="3.40.50.10990">
    <property type="entry name" value="GTP cyclohydrolase II"/>
    <property type="match status" value="1"/>
</dbReference>
<dbReference type="HAMAP" id="MF_00179">
    <property type="entry name" value="RibA"/>
    <property type="match status" value="1"/>
</dbReference>
<dbReference type="InterPro" id="IPR032677">
    <property type="entry name" value="GTP_cyclohydro_II"/>
</dbReference>
<dbReference type="InterPro" id="IPR000926">
    <property type="entry name" value="RibA"/>
</dbReference>
<dbReference type="InterPro" id="IPR036144">
    <property type="entry name" value="RibA-like_sf"/>
</dbReference>
<dbReference type="NCBIfam" id="NF001591">
    <property type="entry name" value="PRK00393.1"/>
    <property type="match status" value="1"/>
</dbReference>
<dbReference type="NCBIfam" id="TIGR00505">
    <property type="entry name" value="ribA"/>
    <property type="match status" value="1"/>
</dbReference>
<dbReference type="PANTHER" id="PTHR21327:SF18">
    <property type="entry name" value="3,4-DIHYDROXY-2-BUTANONE 4-PHOSPHATE SYNTHASE"/>
    <property type="match status" value="1"/>
</dbReference>
<dbReference type="PANTHER" id="PTHR21327">
    <property type="entry name" value="GTP CYCLOHYDROLASE II-RELATED"/>
    <property type="match status" value="1"/>
</dbReference>
<dbReference type="Pfam" id="PF00925">
    <property type="entry name" value="GTP_cyclohydro2"/>
    <property type="match status" value="1"/>
</dbReference>
<dbReference type="SUPFAM" id="SSF142695">
    <property type="entry name" value="RibA-like"/>
    <property type="match status" value="1"/>
</dbReference>
<sequence length="200" mass="22189">MAIEFVATSKLPTKFGDFNISVFQDPVTGEEHVALSKGLEIAPTGPVLVRIHSECLTGDAFASLKCDCGPQLQATQKLINDVGQGVILYLRQEGRGIGLTNKIRAYALQDQGHDTVDANLLLNLPADARRYDMCSIMLDHLQVKQVKLITNNPLKLKALTDLGINVIDRVPLTVGKNPFNEQYLKTKKERMAHLYQKDDF</sequence>
<evidence type="ECO:0000255" key="1">
    <source>
        <dbReference type="HAMAP-Rule" id="MF_00179"/>
    </source>
</evidence>